<evidence type="ECO:0000255" key="1">
    <source>
        <dbReference type="HAMAP-Rule" id="MF_00016"/>
    </source>
</evidence>
<evidence type="ECO:0000269" key="2">
    <source>
    </source>
</evidence>
<evidence type="ECO:0000303" key="3">
    <source>
    </source>
</evidence>
<evidence type="ECO:0000305" key="4">
    <source>
    </source>
</evidence>
<organism>
    <name type="scientific">Mycobacterium tuberculosis (strain ATCC 25618 / H37Rv)</name>
    <dbReference type="NCBI Taxonomy" id="83332"/>
    <lineage>
        <taxon>Bacteria</taxon>
        <taxon>Bacillati</taxon>
        <taxon>Actinomycetota</taxon>
        <taxon>Actinomycetes</taxon>
        <taxon>Mycobacteriales</taxon>
        <taxon>Mycobacteriaceae</taxon>
        <taxon>Mycobacterium</taxon>
        <taxon>Mycobacterium tuberculosis complex</taxon>
    </lineage>
</organism>
<proteinExistence type="evidence at protein level"/>
<reference key="1">
    <citation type="journal article" date="1998" name="Nature">
        <title>Deciphering the biology of Mycobacterium tuberculosis from the complete genome sequence.</title>
        <authorList>
            <person name="Cole S.T."/>
            <person name="Brosch R."/>
            <person name="Parkhill J."/>
            <person name="Garnier T."/>
            <person name="Churcher C.M."/>
            <person name="Harris D.E."/>
            <person name="Gordon S.V."/>
            <person name="Eiglmeier K."/>
            <person name="Gas S."/>
            <person name="Barry C.E. III"/>
            <person name="Tekaia F."/>
            <person name="Badcock K."/>
            <person name="Basham D."/>
            <person name="Brown D."/>
            <person name="Chillingworth T."/>
            <person name="Connor R."/>
            <person name="Davies R.M."/>
            <person name="Devlin K."/>
            <person name="Feltwell T."/>
            <person name="Gentles S."/>
            <person name="Hamlin N."/>
            <person name="Holroyd S."/>
            <person name="Hornsby T."/>
            <person name="Jagels K."/>
            <person name="Krogh A."/>
            <person name="McLean J."/>
            <person name="Moule S."/>
            <person name="Murphy L.D."/>
            <person name="Oliver S."/>
            <person name="Osborne J."/>
            <person name="Quail M.A."/>
            <person name="Rajandream M.A."/>
            <person name="Rogers J."/>
            <person name="Rutter S."/>
            <person name="Seeger K."/>
            <person name="Skelton S."/>
            <person name="Squares S."/>
            <person name="Squares R."/>
            <person name="Sulston J.E."/>
            <person name="Taylor K."/>
            <person name="Whitehead S."/>
            <person name="Barrell B.G."/>
        </authorList>
    </citation>
    <scope>NUCLEOTIDE SEQUENCE [LARGE SCALE GENOMIC DNA]</scope>
    <source>
        <strain>ATCC 25618 / H37Rv</strain>
    </source>
</reference>
<reference key="2">
    <citation type="journal article" date="2011" name="Mol. Cell. Proteomics">
        <title>Proteogenomic analysis of Mycobacterium tuberculosis by high resolution mass spectrometry.</title>
        <authorList>
            <person name="Kelkar D.S."/>
            <person name="Kumar D."/>
            <person name="Kumar P."/>
            <person name="Balakrishnan L."/>
            <person name="Muthusamy B."/>
            <person name="Yadav A.K."/>
            <person name="Shrivastava P."/>
            <person name="Marimuthu A."/>
            <person name="Anand S."/>
            <person name="Sundaram H."/>
            <person name="Kingsbury R."/>
            <person name="Harsha H.C."/>
            <person name="Nair B."/>
            <person name="Prasad T.S."/>
            <person name="Chauhan D.S."/>
            <person name="Katoch K."/>
            <person name="Katoch V.M."/>
            <person name="Kumar P."/>
            <person name="Chaerkady R."/>
            <person name="Ramachandran S."/>
            <person name="Dash D."/>
            <person name="Pandey A."/>
        </authorList>
    </citation>
    <scope>IDENTIFICATION BY MASS SPECTROMETRY [LARGE SCALE ANALYSIS]</scope>
    <source>
        <strain>ATCC 25618 / H37Rv</strain>
    </source>
</reference>
<reference key="3">
    <citation type="journal article" date="2012" name="J. Biol. Chem.">
        <title>Functional analysis of DNA replication fork reversal catalyzed by Mycobacterium tuberculosis RuvAB proteins.</title>
        <authorList>
            <person name="Khanduja J.S."/>
            <person name="Muniyappa K."/>
        </authorList>
    </citation>
    <scope>FUNCTION</scope>
    <scope>CATALYTIC ACTIVITY</scope>
    <scope>SUBUNIT</scope>
</reference>
<protein>
    <recommendedName>
        <fullName evidence="1">Holliday junction branch migration complex subunit RuvB</fullName>
        <ecNumber evidence="1 4">3.6.4.-</ecNumber>
    </recommendedName>
</protein>
<gene>
    <name evidence="1 3" type="primary">ruvB</name>
    <name type="ordered locus">Rv2592c</name>
    <name type="ORF">MTCY227.09</name>
</gene>
<comment type="function">
    <text evidence="1 2">The RuvA-RuvB-RuvC complex processes Holliday junction (HJ) DNA during genetic recombination and DNA repair, while the RuvA-RuvB complex plays an important role in the rescue of blocked DNA replication forks via replication fork reversal (RFR). RuvB binds Holliday junction (HJ) DNA in the presence of RuvA (PubMed:22094465). RuvA specifically binds to HJ cruciform DNA, conferring on it an open structure. The RuvB hexamer acts as an ATP-dependent pump, pulling dsDNA into and through the RuvAB complex. RuvB forms 2 homohexamers on either side of HJ DNA bound by 1 or 2 RuvA tetramers; 4 subunits per hexamer contact DNA at a time. Coordinated motions by a converter formed by DNA-disengaged RuvB subunits stimulates ATP hydrolysis and nucleotide exchange. Immobilization of the converter enables RuvB to convert the ATP-contained energy into a lever motion, pulling 2 nucleotides of DNA out of the RuvA tetramer per ATP hydrolyzed, thus driving DNA branch migration. The RuvB motors rotate together with the DNA substrate, which together with the progressing nucleotide cycle form the mechanistic basis for DNA recombination by continuous HJ branch migration. Branch migration allows RuvC to scan DNA until it finds its consensus sequence, where it cleaves and resolves cruciform DNA.</text>
</comment>
<comment type="catalytic activity">
    <reaction evidence="1 4">
        <text>ATP + H2O = ADP + phosphate + H(+)</text>
        <dbReference type="Rhea" id="RHEA:13065"/>
        <dbReference type="ChEBI" id="CHEBI:15377"/>
        <dbReference type="ChEBI" id="CHEBI:15378"/>
        <dbReference type="ChEBI" id="CHEBI:30616"/>
        <dbReference type="ChEBI" id="CHEBI:43474"/>
        <dbReference type="ChEBI" id="CHEBI:456216"/>
    </reaction>
</comment>
<comment type="subunit">
    <text evidence="1">Homohexamer. Forms an RuvA(8)-RuvB(12)-Holliday junction (HJ) complex. HJ DNA is sandwiched between 2 RuvA tetramers; dsDNA enters through RuvA and exits via RuvB. An RuvB hexamer assembles on each DNA strand where it exits the tetramer. Each RuvB hexamer is contacted by two RuvA subunits (via domain III) on 2 adjacent RuvB subunits; this complex drives branch migration. In the full resolvosome a probable DNA-RuvA(4)-RuvB(12)-RuvC(2) complex forms which resolves the HJ.</text>
</comment>
<comment type="subcellular location">
    <subcellularLocation>
        <location evidence="1">Cytoplasm</location>
    </subcellularLocation>
</comment>
<comment type="domain">
    <text evidence="1">Has 3 domains, the large (RuvB-L) and small ATPase (RuvB-S) domains and the C-terminal head (RuvB-H) domain. The head domain binds DNA, while the ATPase domains jointly bind ATP, ADP or are empty depending on the state of the subunit in the translocation cycle. During a single DNA translocation step the structure of each domain remains the same, but their relative positions change.</text>
</comment>
<comment type="similarity">
    <text evidence="1">Belongs to the RuvB family.</text>
</comment>
<name>RUVB_MYCTU</name>
<feature type="chain" id="PRO_0000165562" description="Holliday junction branch migration complex subunit RuvB">
    <location>
        <begin position="1"/>
        <end position="344"/>
    </location>
</feature>
<feature type="region of interest" description="Large ATPase domain (RuvB-L)" evidence="1">
    <location>
        <begin position="1"/>
        <end position="185"/>
    </location>
</feature>
<feature type="region of interest" description="Small ATPAse domain (RuvB-S)" evidence="1">
    <location>
        <begin position="186"/>
        <end position="256"/>
    </location>
</feature>
<feature type="region of interest" description="Head domain (RuvB-H)" evidence="1">
    <location>
        <begin position="259"/>
        <end position="344"/>
    </location>
</feature>
<feature type="binding site" evidence="1">
    <location>
        <position position="24"/>
    </location>
    <ligand>
        <name>ATP</name>
        <dbReference type="ChEBI" id="CHEBI:30616"/>
    </ligand>
</feature>
<feature type="binding site" evidence="1">
    <location>
        <position position="25"/>
    </location>
    <ligand>
        <name>ATP</name>
        <dbReference type="ChEBI" id="CHEBI:30616"/>
    </ligand>
</feature>
<feature type="binding site" evidence="1">
    <location>
        <position position="66"/>
    </location>
    <ligand>
        <name>ATP</name>
        <dbReference type="ChEBI" id="CHEBI:30616"/>
    </ligand>
</feature>
<feature type="binding site" evidence="1">
    <location>
        <position position="69"/>
    </location>
    <ligand>
        <name>ATP</name>
        <dbReference type="ChEBI" id="CHEBI:30616"/>
    </ligand>
</feature>
<feature type="binding site" evidence="1">
    <location>
        <position position="70"/>
    </location>
    <ligand>
        <name>ATP</name>
        <dbReference type="ChEBI" id="CHEBI:30616"/>
    </ligand>
</feature>
<feature type="binding site" evidence="1">
    <location>
        <position position="70"/>
    </location>
    <ligand>
        <name>Mg(2+)</name>
        <dbReference type="ChEBI" id="CHEBI:18420"/>
    </ligand>
</feature>
<feature type="binding site" evidence="1">
    <location>
        <position position="71"/>
    </location>
    <ligand>
        <name>ATP</name>
        <dbReference type="ChEBI" id="CHEBI:30616"/>
    </ligand>
</feature>
<feature type="binding site" evidence="1">
    <location>
        <begin position="132"/>
        <end position="134"/>
    </location>
    <ligand>
        <name>ATP</name>
        <dbReference type="ChEBI" id="CHEBI:30616"/>
    </ligand>
</feature>
<feature type="binding site" evidence="1">
    <location>
        <position position="175"/>
    </location>
    <ligand>
        <name>ATP</name>
        <dbReference type="ChEBI" id="CHEBI:30616"/>
    </ligand>
</feature>
<feature type="binding site" evidence="1">
    <location>
        <position position="185"/>
    </location>
    <ligand>
        <name>ATP</name>
        <dbReference type="ChEBI" id="CHEBI:30616"/>
    </ligand>
</feature>
<feature type="binding site" evidence="1">
    <location>
        <position position="222"/>
    </location>
    <ligand>
        <name>ATP</name>
        <dbReference type="ChEBI" id="CHEBI:30616"/>
    </ligand>
</feature>
<feature type="binding site" evidence="1">
    <location>
        <position position="314"/>
    </location>
    <ligand>
        <name>DNA</name>
        <dbReference type="ChEBI" id="CHEBI:16991"/>
    </ligand>
</feature>
<feature type="binding site" evidence="1">
    <location>
        <position position="319"/>
    </location>
    <ligand>
        <name>DNA</name>
        <dbReference type="ChEBI" id="CHEBI:16991"/>
    </ligand>
</feature>
<keyword id="KW-0067">ATP-binding</keyword>
<keyword id="KW-0963">Cytoplasm</keyword>
<keyword id="KW-0227">DNA damage</keyword>
<keyword id="KW-0233">DNA recombination</keyword>
<keyword id="KW-0234">DNA repair</keyword>
<keyword id="KW-0238">DNA-binding</keyword>
<keyword id="KW-0378">Hydrolase</keyword>
<keyword id="KW-0547">Nucleotide-binding</keyword>
<keyword id="KW-1185">Reference proteome</keyword>
<dbReference type="EC" id="3.6.4.-" evidence="1 4"/>
<dbReference type="EMBL" id="AL123456">
    <property type="protein sequence ID" value="CCP45388.1"/>
    <property type="molecule type" value="Genomic_DNA"/>
</dbReference>
<dbReference type="PIR" id="G70726">
    <property type="entry name" value="G70726"/>
</dbReference>
<dbReference type="RefSeq" id="NP_217108.1">
    <property type="nucleotide sequence ID" value="NC_000962.3"/>
</dbReference>
<dbReference type="RefSeq" id="WP_003413416.1">
    <property type="nucleotide sequence ID" value="NZ_NVQJ01000023.1"/>
</dbReference>
<dbReference type="SMR" id="P9WGW1"/>
<dbReference type="FunCoup" id="P9WGW1">
    <property type="interactions" value="73"/>
</dbReference>
<dbReference type="STRING" id="83332.Rv2592c"/>
<dbReference type="PaxDb" id="83332-Rv2592c"/>
<dbReference type="DNASU" id="888173"/>
<dbReference type="GeneID" id="45426594"/>
<dbReference type="GeneID" id="888173"/>
<dbReference type="KEGG" id="mtu:Rv2592c"/>
<dbReference type="KEGG" id="mtv:RVBD_2592c"/>
<dbReference type="TubercuList" id="Rv2592c"/>
<dbReference type="eggNOG" id="COG2255">
    <property type="taxonomic scope" value="Bacteria"/>
</dbReference>
<dbReference type="InParanoid" id="P9WGW1"/>
<dbReference type="OrthoDB" id="9804478at2"/>
<dbReference type="PhylomeDB" id="P9WGW1"/>
<dbReference type="BRENDA" id="3.1.21.10">
    <property type="organism ID" value="3445"/>
</dbReference>
<dbReference type="Proteomes" id="UP000001584">
    <property type="component" value="Chromosome"/>
</dbReference>
<dbReference type="GO" id="GO:0005737">
    <property type="term" value="C:cytoplasm"/>
    <property type="evidence" value="ECO:0007669"/>
    <property type="project" value="UniProtKB-SubCell"/>
</dbReference>
<dbReference type="GO" id="GO:0048476">
    <property type="term" value="C:Holliday junction resolvase complex"/>
    <property type="evidence" value="ECO:0007669"/>
    <property type="project" value="UniProtKB-UniRule"/>
</dbReference>
<dbReference type="GO" id="GO:0005524">
    <property type="term" value="F:ATP binding"/>
    <property type="evidence" value="ECO:0007669"/>
    <property type="project" value="UniProtKB-UniRule"/>
</dbReference>
<dbReference type="GO" id="GO:0016887">
    <property type="term" value="F:ATP hydrolysis activity"/>
    <property type="evidence" value="ECO:0007669"/>
    <property type="project" value="InterPro"/>
</dbReference>
<dbReference type="GO" id="GO:0000400">
    <property type="term" value="F:four-way junction DNA binding"/>
    <property type="evidence" value="ECO:0007669"/>
    <property type="project" value="UniProtKB-UniRule"/>
</dbReference>
<dbReference type="GO" id="GO:0009378">
    <property type="term" value="F:four-way junction helicase activity"/>
    <property type="evidence" value="ECO:0007669"/>
    <property type="project" value="InterPro"/>
</dbReference>
<dbReference type="GO" id="GO:0006310">
    <property type="term" value="P:DNA recombination"/>
    <property type="evidence" value="ECO:0007669"/>
    <property type="project" value="UniProtKB-UniRule"/>
</dbReference>
<dbReference type="GO" id="GO:0006281">
    <property type="term" value="P:DNA repair"/>
    <property type="evidence" value="ECO:0007669"/>
    <property type="project" value="UniProtKB-UniRule"/>
</dbReference>
<dbReference type="CDD" id="cd00009">
    <property type="entry name" value="AAA"/>
    <property type="match status" value="1"/>
</dbReference>
<dbReference type="Gene3D" id="1.10.8.60">
    <property type="match status" value="1"/>
</dbReference>
<dbReference type="Gene3D" id="3.40.50.300">
    <property type="entry name" value="P-loop containing nucleotide triphosphate hydrolases"/>
    <property type="match status" value="1"/>
</dbReference>
<dbReference type="Gene3D" id="1.10.10.10">
    <property type="entry name" value="Winged helix-like DNA-binding domain superfamily/Winged helix DNA-binding domain"/>
    <property type="match status" value="1"/>
</dbReference>
<dbReference type="HAMAP" id="MF_00016">
    <property type="entry name" value="DNA_HJ_migration_RuvB"/>
    <property type="match status" value="1"/>
</dbReference>
<dbReference type="InterPro" id="IPR003593">
    <property type="entry name" value="AAA+_ATPase"/>
</dbReference>
<dbReference type="InterPro" id="IPR041445">
    <property type="entry name" value="AAA_lid_4"/>
</dbReference>
<dbReference type="InterPro" id="IPR004605">
    <property type="entry name" value="DNA_helicase_Holl-junc_RuvB"/>
</dbReference>
<dbReference type="InterPro" id="IPR027417">
    <property type="entry name" value="P-loop_NTPase"/>
</dbReference>
<dbReference type="InterPro" id="IPR008824">
    <property type="entry name" value="RuvB-like_N"/>
</dbReference>
<dbReference type="InterPro" id="IPR008823">
    <property type="entry name" value="RuvB_C"/>
</dbReference>
<dbReference type="InterPro" id="IPR036388">
    <property type="entry name" value="WH-like_DNA-bd_sf"/>
</dbReference>
<dbReference type="InterPro" id="IPR036390">
    <property type="entry name" value="WH_DNA-bd_sf"/>
</dbReference>
<dbReference type="NCBIfam" id="NF000868">
    <property type="entry name" value="PRK00080.1"/>
    <property type="match status" value="1"/>
</dbReference>
<dbReference type="NCBIfam" id="TIGR00635">
    <property type="entry name" value="ruvB"/>
    <property type="match status" value="1"/>
</dbReference>
<dbReference type="PANTHER" id="PTHR42848">
    <property type="match status" value="1"/>
</dbReference>
<dbReference type="PANTHER" id="PTHR42848:SF1">
    <property type="entry name" value="HOLLIDAY JUNCTION BRANCH MIGRATION COMPLEX SUBUNIT RUVB"/>
    <property type="match status" value="1"/>
</dbReference>
<dbReference type="Pfam" id="PF17864">
    <property type="entry name" value="AAA_lid_4"/>
    <property type="match status" value="1"/>
</dbReference>
<dbReference type="Pfam" id="PF05491">
    <property type="entry name" value="RuvB_C"/>
    <property type="match status" value="1"/>
</dbReference>
<dbReference type="Pfam" id="PF05496">
    <property type="entry name" value="RuvB_N"/>
    <property type="match status" value="1"/>
</dbReference>
<dbReference type="PRINTS" id="PR00830">
    <property type="entry name" value="ENDOLAPTASE"/>
</dbReference>
<dbReference type="SMART" id="SM00382">
    <property type="entry name" value="AAA"/>
    <property type="match status" value="1"/>
</dbReference>
<dbReference type="SUPFAM" id="SSF52540">
    <property type="entry name" value="P-loop containing nucleoside triphosphate hydrolases"/>
    <property type="match status" value="1"/>
</dbReference>
<dbReference type="SUPFAM" id="SSF46785">
    <property type="entry name" value="Winged helix' DNA-binding domain"/>
    <property type="match status" value="1"/>
</dbReference>
<accession>P9WGW1</accession>
<accession>L0TCV1</accession>
<accession>P66753</accession>
<accession>Q50629</accession>
<sequence length="344" mass="36627">MTERSDRDVSPALTVGEGDIDVSLRPRSLREFIGQPRVREQLQLVIEGAKNRGGTPDHILLSGPPGLGKTSLAMIIAAELGSSLRVTSGPALERAGDLAAMLSNLVEHDVLFIDEIHRIARPAEEMLYLAMEDFRVDVVVGKGPGATSIPLEVAPFTLVGATTRSGALTGPLRDRFGFTAHMDFYEPAELERVLARSAGILGIELGADAGAEIARRSRGTPRIANRLLRRVRDFAEVRADGVITRDVAKAALEVYDVDELGLDRLDRAVLSALTRSFGGGPVGVSTLAVAVGEEAATVEEVCEPFLVRAGMVARTPRGRVATALAWTHLGMTPPVGASQPGLFE</sequence>